<gene>
    <name evidence="1" type="primary">mshA</name>
    <name type="ordered locus">SCAB_49901</name>
</gene>
<feature type="chain" id="PRO_0000400165" description="D-inositol 3-phosphate glycosyltransferase">
    <location>
        <begin position="1"/>
        <end position="446"/>
    </location>
</feature>
<feature type="region of interest" description="Disordered" evidence="2">
    <location>
        <begin position="1"/>
        <end position="21"/>
    </location>
</feature>
<feature type="binding site" evidence="1">
    <location>
        <position position="34"/>
    </location>
    <ligand>
        <name>1D-myo-inositol 3-phosphate</name>
        <dbReference type="ChEBI" id="CHEBI:58401"/>
    </ligand>
</feature>
<feature type="binding site" evidence="1">
    <location>
        <begin position="40"/>
        <end position="41"/>
    </location>
    <ligand>
        <name>UDP-N-acetyl-alpha-D-glucosamine</name>
        <dbReference type="ChEBI" id="CHEBI:57705"/>
    </ligand>
</feature>
<feature type="binding site" evidence="1">
    <location>
        <begin position="45"/>
        <end position="50"/>
    </location>
    <ligand>
        <name>1D-myo-inositol 3-phosphate</name>
        <dbReference type="ChEBI" id="CHEBI:58401"/>
    </ligand>
</feature>
<feature type="binding site" evidence="1">
    <location>
        <position position="48"/>
    </location>
    <ligand>
        <name>UDP-N-acetyl-alpha-D-glucosamine</name>
        <dbReference type="ChEBI" id="CHEBI:57705"/>
    </ligand>
</feature>
<feature type="binding site" evidence="1">
    <location>
        <position position="103"/>
    </location>
    <ligand>
        <name>1D-myo-inositol 3-phosphate</name>
        <dbReference type="ChEBI" id="CHEBI:58401"/>
    </ligand>
</feature>
<feature type="binding site" evidence="1">
    <location>
        <position position="136"/>
    </location>
    <ligand>
        <name>1D-myo-inositol 3-phosphate</name>
        <dbReference type="ChEBI" id="CHEBI:58401"/>
    </ligand>
</feature>
<feature type="binding site" evidence="1">
    <location>
        <position position="160"/>
    </location>
    <ligand>
        <name>1D-myo-inositol 3-phosphate</name>
        <dbReference type="ChEBI" id="CHEBI:58401"/>
    </ligand>
</feature>
<feature type="binding site" evidence="1">
    <location>
        <position position="180"/>
    </location>
    <ligand>
        <name>1D-myo-inositol 3-phosphate</name>
        <dbReference type="ChEBI" id="CHEBI:58401"/>
    </ligand>
</feature>
<feature type="binding site" evidence="1">
    <location>
        <position position="255"/>
    </location>
    <ligand>
        <name>UDP-N-acetyl-alpha-D-glucosamine</name>
        <dbReference type="ChEBI" id="CHEBI:57705"/>
    </ligand>
</feature>
<feature type="binding site" evidence="1">
    <location>
        <position position="260"/>
    </location>
    <ligand>
        <name>UDP-N-acetyl-alpha-D-glucosamine</name>
        <dbReference type="ChEBI" id="CHEBI:57705"/>
    </ligand>
</feature>
<feature type="binding site" evidence="1">
    <location>
        <position position="321"/>
    </location>
    <ligand>
        <name>UDP-N-acetyl-alpha-D-glucosamine</name>
        <dbReference type="ChEBI" id="CHEBI:57705"/>
    </ligand>
</feature>
<feature type="binding site" evidence="1">
    <location>
        <position position="330"/>
    </location>
    <ligand>
        <name>Mg(2+)</name>
        <dbReference type="ChEBI" id="CHEBI:18420"/>
    </ligand>
</feature>
<feature type="binding site" evidence="1">
    <location>
        <position position="331"/>
    </location>
    <ligand>
        <name>Mg(2+)</name>
        <dbReference type="ChEBI" id="CHEBI:18420"/>
    </ligand>
</feature>
<feature type="binding site" evidence="1">
    <location>
        <position position="333"/>
    </location>
    <ligand>
        <name>Mg(2+)</name>
        <dbReference type="ChEBI" id="CHEBI:18420"/>
    </ligand>
</feature>
<feature type="binding site" evidence="1">
    <location>
        <position position="343"/>
    </location>
    <ligand>
        <name>UDP-N-acetyl-alpha-D-glucosamine</name>
        <dbReference type="ChEBI" id="CHEBI:57705"/>
    </ligand>
</feature>
<feature type="binding site" evidence="1">
    <location>
        <position position="351"/>
    </location>
    <ligand>
        <name>UDP-N-acetyl-alpha-D-glucosamine</name>
        <dbReference type="ChEBI" id="CHEBI:57705"/>
    </ligand>
</feature>
<feature type="binding site" evidence="1">
    <location>
        <position position="357"/>
    </location>
    <ligand>
        <name>Mg(2+)</name>
        <dbReference type="ChEBI" id="CHEBI:18420"/>
    </ligand>
</feature>
<accession>C9ZH13</accession>
<keyword id="KW-0328">Glycosyltransferase</keyword>
<keyword id="KW-0460">Magnesium</keyword>
<keyword id="KW-0479">Metal-binding</keyword>
<keyword id="KW-1185">Reference proteome</keyword>
<keyword id="KW-0808">Transferase</keyword>
<dbReference type="EC" id="2.4.1.250" evidence="1"/>
<dbReference type="EMBL" id="FN554889">
    <property type="protein sequence ID" value="CBG72038.1"/>
    <property type="molecule type" value="Genomic_DNA"/>
</dbReference>
<dbReference type="RefSeq" id="WP_013002623.1">
    <property type="nucleotide sequence ID" value="NC_013929.1"/>
</dbReference>
<dbReference type="SMR" id="C9ZH13"/>
<dbReference type="STRING" id="680198.SCAB_49901"/>
<dbReference type="CAZy" id="GT4">
    <property type="family name" value="Glycosyltransferase Family 4"/>
</dbReference>
<dbReference type="GeneID" id="24311991"/>
<dbReference type="KEGG" id="scb:SCAB_49901"/>
<dbReference type="eggNOG" id="COG0438">
    <property type="taxonomic scope" value="Bacteria"/>
</dbReference>
<dbReference type="HOGENOM" id="CLU_009583_2_3_11"/>
<dbReference type="Proteomes" id="UP000001444">
    <property type="component" value="Chromosome"/>
</dbReference>
<dbReference type="GO" id="GO:0008375">
    <property type="term" value="F:acetylglucosaminyltransferase activity"/>
    <property type="evidence" value="ECO:0007669"/>
    <property type="project" value="UniProtKB-UniRule"/>
</dbReference>
<dbReference type="GO" id="GO:0102710">
    <property type="term" value="F:D-inositol-3-phosphate glycosyltransferase activity"/>
    <property type="evidence" value="ECO:0007669"/>
    <property type="project" value="UniProtKB-EC"/>
</dbReference>
<dbReference type="GO" id="GO:0000287">
    <property type="term" value="F:magnesium ion binding"/>
    <property type="evidence" value="ECO:0007669"/>
    <property type="project" value="UniProtKB-UniRule"/>
</dbReference>
<dbReference type="GO" id="GO:0010125">
    <property type="term" value="P:mycothiol biosynthetic process"/>
    <property type="evidence" value="ECO:0007669"/>
    <property type="project" value="UniProtKB-UniRule"/>
</dbReference>
<dbReference type="CDD" id="cd03800">
    <property type="entry name" value="GT4_sucrose_synthase"/>
    <property type="match status" value="1"/>
</dbReference>
<dbReference type="Gene3D" id="3.40.50.2000">
    <property type="entry name" value="Glycogen Phosphorylase B"/>
    <property type="match status" value="2"/>
</dbReference>
<dbReference type="HAMAP" id="MF_01695">
    <property type="entry name" value="MshA"/>
    <property type="match status" value="1"/>
</dbReference>
<dbReference type="InterPro" id="IPR001296">
    <property type="entry name" value="Glyco_trans_1"/>
</dbReference>
<dbReference type="InterPro" id="IPR028098">
    <property type="entry name" value="Glyco_trans_4-like_N"/>
</dbReference>
<dbReference type="InterPro" id="IPR017814">
    <property type="entry name" value="Mycothiol_biosynthesis_MshA"/>
</dbReference>
<dbReference type="NCBIfam" id="TIGR03449">
    <property type="entry name" value="mycothiol_MshA"/>
    <property type="match status" value="1"/>
</dbReference>
<dbReference type="PANTHER" id="PTHR12526:SF510">
    <property type="entry name" value="D-INOSITOL 3-PHOSPHATE GLYCOSYLTRANSFERASE"/>
    <property type="match status" value="1"/>
</dbReference>
<dbReference type="PANTHER" id="PTHR12526">
    <property type="entry name" value="GLYCOSYLTRANSFERASE"/>
    <property type="match status" value="1"/>
</dbReference>
<dbReference type="Pfam" id="PF13579">
    <property type="entry name" value="Glyco_trans_4_4"/>
    <property type="match status" value="1"/>
</dbReference>
<dbReference type="Pfam" id="PF00534">
    <property type="entry name" value="Glycos_transf_1"/>
    <property type="match status" value="1"/>
</dbReference>
<dbReference type="SUPFAM" id="SSF53756">
    <property type="entry name" value="UDP-Glycosyltransferase/glycogen phosphorylase"/>
    <property type="match status" value="1"/>
</dbReference>
<proteinExistence type="inferred from homology"/>
<sequence length="446" mass="47605">MSHYVGRLGRRSPAGSGRLRLHRKPRRVAMLSVHTSPLHQPGTGDAGGMNVYIVELAQRLAAQNVEVEIFTRATTGALPPTVELAPGVLVRHVDAGPYEGLAKEELPAQLCAFTHGVMQAWAGHRPGHYDLVHSHYWLSGHVGWLAAERWGVPLVHAMHTMAKVKNAALADDDTPEPAARVIGETQIVRAADRLIANTAEEAGELVRHYEADPDKVAVVHPGVNLDRFRPADGRAAARARLGLPQDALIPLFAGRIQPLKAPDVLLRAVAVLLDERPELRSRIVVPVVGGPSGSGLAKPEGLQKLAARLGIADVVRFRPPVGQEQLADWFRAASVLVMPSYSESFGLVAIEAQAAGTPVLAASVGGLPVAVRDGRTGFLVQGHDPAAYARVLGDFADTPDLPARMGAAAAAHAESFGWDTSAAATAEVYTAAMHDHRRYRVRGHYG</sequence>
<protein>
    <recommendedName>
        <fullName>D-inositol 3-phosphate glycosyltransferase</fullName>
        <ecNumber evidence="1">2.4.1.250</ecNumber>
    </recommendedName>
    <alternativeName>
        <fullName evidence="1">N-acetylglucosamine-inositol-phosphate N-acetylglucosaminyltransferase</fullName>
        <shortName evidence="1">GlcNAc-Ins-P N-acetylglucosaminyltransferase</shortName>
    </alternativeName>
</protein>
<name>MSHA_STRSW</name>
<comment type="function">
    <text evidence="1">Catalyzes the transfer of a N-acetyl-glucosamine moiety to 1D-myo-inositol 3-phosphate to produce 1D-myo-inositol 2-acetamido-2-deoxy-glucopyranoside 3-phosphate in the mycothiol biosynthesis pathway.</text>
</comment>
<comment type="catalytic activity">
    <reaction evidence="1">
        <text>1D-myo-inositol 3-phosphate + UDP-N-acetyl-alpha-D-glucosamine = 1D-myo-inositol 2-acetamido-2-deoxy-alpha-D-glucopyranoside 3-phosphate + UDP + H(+)</text>
        <dbReference type="Rhea" id="RHEA:26188"/>
        <dbReference type="ChEBI" id="CHEBI:15378"/>
        <dbReference type="ChEBI" id="CHEBI:57705"/>
        <dbReference type="ChEBI" id="CHEBI:58223"/>
        <dbReference type="ChEBI" id="CHEBI:58401"/>
        <dbReference type="ChEBI" id="CHEBI:58892"/>
        <dbReference type="EC" id="2.4.1.250"/>
    </reaction>
</comment>
<comment type="subunit">
    <text evidence="1">Homodimer.</text>
</comment>
<comment type="similarity">
    <text evidence="1">Belongs to the glycosyltransferase group 1 family. MshA subfamily.</text>
</comment>
<evidence type="ECO:0000255" key="1">
    <source>
        <dbReference type="HAMAP-Rule" id="MF_01695"/>
    </source>
</evidence>
<evidence type="ECO:0000256" key="2">
    <source>
        <dbReference type="SAM" id="MobiDB-lite"/>
    </source>
</evidence>
<organism>
    <name type="scientific">Streptomyces scabiei (strain 87.22)</name>
    <dbReference type="NCBI Taxonomy" id="680198"/>
    <lineage>
        <taxon>Bacteria</taxon>
        <taxon>Bacillati</taxon>
        <taxon>Actinomycetota</taxon>
        <taxon>Actinomycetes</taxon>
        <taxon>Kitasatosporales</taxon>
        <taxon>Streptomycetaceae</taxon>
        <taxon>Streptomyces</taxon>
    </lineage>
</organism>
<reference key="1">
    <citation type="journal article" date="2010" name="Mol. Plant Microbe Interact.">
        <title>Streptomyces scabies 87-22 contains a coronafacic acid-like biosynthetic cluster that contributes to plant-microbe interactions.</title>
        <authorList>
            <person name="Bignell D.R."/>
            <person name="Seipke R.F."/>
            <person name="Huguet-Tapia J.C."/>
            <person name="Chambers A.H."/>
            <person name="Parry R.J."/>
            <person name="Loria R."/>
        </authorList>
    </citation>
    <scope>NUCLEOTIDE SEQUENCE [LARGE SCALE GENOMIC DNA]</scope>
    <source>
        <strain>87.22</strain>
    </source>
</reference>